<gene>
    <name evidence="4" type="primary">WS</name>
</gene>
<reference key="1">
    <citation type="journal article" date="2022" name="Nature">
        <title>Biosynthesis of strychnine.</title>
        <authorList>
            <person name="Hong B."/>
            <person name="Grzech D."/>
            <person name="Caputi L."/>
            <person name="Sonawane P."/>
            <person name="Lopez C.E.R."/>
            <person name="Kamileen M.O."/>
            <person name="Hernandez Lozada N.J."/>
            <person name="Grabe V."/>
            <person name="O'Connor S.E."/>
        </authorList>
    </citation>
    <scope>NUCLEOTIDE SEQUENCE [MRNA]</scope>
    <scope>FUNCTION</scope>
    <scope>CATALYTIC ACTIVITY</scope>
    <scope>PATHWAY</scope>
    <scope>TISSUE SPECIFICITY</scope>
    <scope>BIOPHYSICOCHEMICAL PROPERTIES</scope>
</reference>
<accession>P0DO83</accession>
<comment type="function">
    <text evidence="3">Alcohol dehydrogenase involved in the biosynthesis of curare monoterpene indole alkaloids (MIAs), natural products such as strychnine, a neurotoxic compound used as a pesticide to control rodents, and its pharmacologically active derivatives, including brucine, used to regulate blood pressure (PubMed:35794473). Curare alkaloids act as animal glycine receptor antagonists (PubMed:35794473). Catalyzes the conversion of norfluorocurarine to desoxy Wieland-Gumlich aldehyde, and of 18-OH norfluorocurarine to Wieland-Gumlich aldehyde (PubMed:35794473).</text>
</comment>
<comment type="catalytic activity">
    <reaction evidence="3">
        <text>(19E)-cur-19-en-17-al + NADP(+) = norfluorocurarine + NADPH + H(+)</text>
        <dbReference type="Rhea" id="RHEA:80903"/>
        <dbReference type="ChEBI" id="CHEBI:15378"/>
        <dbReference type="ChEBI" id="CHEBI:57783"/>
        <dbReference type="ChEBI" id="CHEBI:58349"/>
        <dbReference type="ChEBI" id="CHEBI:231650"/>
        <dbReference type="ChEBI" id="CHEBI:231653"/>
        <dbReference type="EC" id="1.5.1.57"/>
    </reaction>
    <physiologicalReaction direction="right-to-left" evidence="3">
        <dbReference type="Rhea" id="RHEA:80905"/>
    </physiologicalReaction>
</comment>
<comment type="catalytic activity">
    <reaction evidence="3">
        <text>17,18-epoxy-17-hydroxycur-19-ene + NADP(+) = 18-hydroxynorfluorocurarine + NADPH + H(+)</text>
        <dbReference type="Rhea" id="RHEA:80911"/>
        <dbReference type="ChEBI" id="CHEBI:15378"/>
        <dbReference type="ChEBI" id="CHEBI:57783"/>
        <dbReference type="ChEBI" id="CHEBI:58349"/>
        <dbReference type="ChEBI" id="CHEBI:231652"/>
        <dbReference type="ChEBI" id="CHEBI:231746"/>
        <dbReference type="EC" id="1.5.1.57"/>
    </reaction>
    <physiologicalReaction direction="right-to-left" evidence="3">
        <dbReference type="Rhea" id="RHEA:80913"/>
    </physiologicalReaction>
</comment>
<comment type="cofactor">
    <cofactor evidence="2">
        <name>Zn(2+)</name>
        <dbReference type="ChEBI" id="CHEBI:29105"/>
    </cofactor>
    <text evidence="2">Binds 2 Zn(2+) ions per subunit.</text>
</comment>
<comment type="biophysicochemical properties">
    <kinetics>
        <KM evidence="3">4.95 uM for norfluorocurarine</KM>
        <KM evidence="3">5.91 uM for 18-OH norfluorocurarine</KM>
        <Vmax evidence="3">0.337 umol/min/g enzyme with norfluorocurarine as substrate</Vmax>
        <Vmax evidence="3">0.877 umol/min/g enzyme with 18-OH norfluorocurarine as substrate</Vmax>
        <text evidence="3">kcat is 1.754 min(-1) with norfluorocurarine as substrate (PubMed:35794473). kcat is 0.337 min(-1) with 18-OH norfluorocurarine as substrate (PubMed:35794473).</text>
    </kinetics>
</comment>
<comment type="pathway">
    <text evidence="3">Alkaloid biosynthesis.</text>
</comment>
<comment type="subunit">
    <text evidence="2">Homodimer.</text>
</comment>
<comment type="tissue specificity">
    <text evidence="3">Mainly expressed in roots.</text>
</comment>
<comment type="similarity">
    <text evidence="5">Belongs to the zinc-containing alcohol dehydrogenase family.</text>
</comment>
<name>WS_STRNX</name>
<organism>
    <name type="scientific">Strychnos nux-vomica</name>
    <name type="common">Poison nut</name>
    <name type="synonym">Strychnine tree</name>
    <dbReference type="NCBI Taxonomy" id="28545"/>
    <lineage>
        <taxon>Eukaryota</taxon>
        <taxon>Viridiplantae</taxon>
        <taxon>Streptophyta</taxon>
        <taxon>Embryophyta</taxon>
        <taxon>Tracheophyta</taxon>
        <taxon>Spermatophyta</taxon>
        <taxon>Magnoliopsida</taxon>
        <taxon>eudicotyledons</taxon>
        <taxon>Gunneridae</taxon>
        <taxon>Pentapetalae</taxon>
        <taxon>asterids</taxon>
        <taxon>lamiids</taxon>
        <taxon>Gentianales</taxon>
        <taxon>Loganiaceae</taxon>
        <taxon>Strychnos</taxon>
    </lineage>
</organism>
<protein>
    <recommendedName>
        <fullName>18-hydroxynorfluorocurarine reductase</fullName>
        <ecNumber evidence="3">1.5.1.57</ecNumber>
    </recommendedName>
    <alternativeName>
        <fullName evidence="4">Wieland-Gumlich aldehyde synthase</fullName>
        <shortName evidence="4">SnvWS</shortName>
    </alternativeName>
</protein>
<proteinExistence type="evidence at protein level"/>
<keyword id="KW-0479">Metal-binding</keyword>
<keyword id="KW-0520">NAD</keyword>
<keyword id="KW-0560">Oxidoreductase</keyword>
<keyword id="KW-0862">Zinc</keyword>
<feature type="chain" id="PRO_0000461122" description="18-hydroxynorfluorocurarine reductase">
    <location>
        <begin position="1"/>
        <end position="372"/>
    </location>
</feature>
<feature type="binding site" evidence="1">
    <location>
        <position position="47"/>
    </location>
    <ligand>
        <name>Zn(2+)</name>
        <dbReference type="ChEBI" id="CHEBI:29105"/>
        <label>1</label>
        <note>catalytic</note>
    </ligand>
</feature>
<feature type="binding site" evidence="2">
    <location>
        <position position="50"/>
    </location>
    <ligand>
        <name>Zn(2+)</name>
        <dbReference type="ChEBI" id="CHEBI:29105"/>
        <label>1</label>
        <note>catalytic</note>
    </ligand>
</feature>
<feature type="binding site" evidence="1">
    <location>
        <position position="69"/>
    </location>
    <ligand>
        <name>Zn(2+)</name>
        <dbReference type="ChEBI" id="CHEBI:29105"/>
        <label>1</label>
        <note>catalytic</note>
    </ligand>
</feature>
<feature type="binding site" evidence="2">
    <location>
        <position position="70"/>
    </location>
    <ligand>
        <name>Zn(2+)</name>
        <dbReference type="ChEBI" id="CHEBI:29105"/>
        <label>1</label>
        <note>catalytic</note>
    </ligand>
</feature>
<feature type="binding site" evidence="1">
    <location>
        <position position="100"/>
    </location>
    <ligand>
        <name>Zn(2+)</name>
        <dbReference type="ChEBI" id="CHEBI:29105"/>
        <label>2</label>
    </ligand>
</feature>
<feature type="binding site" evidence="1">
    <location>
        <position position="103"/>
    </location>
    <ligand>
        <name>Zn(2+)</name>
        <dbReference type="ChEBI" id="CHEBI:29105"/>
        <label>2</label>
    </ligand>
</feature>
<feature type="binding site" evidence="1">
    <location>
        <position position="106"/>
    </location>
    <ligand>
        <name>Zn(2+)</name>
        <dbReference type="ChEBI" id="CHEBI:29105"/>
        <label>2</label>
    </ligand>
</feature>
<feature type="binding site" evidence="1">
    <location>
        <position position="114"/>
    </location>
    <ligand>
        <name>Zn(2+)</name>
        <dbReference type="ChEBI" id="CHEBI:29105"/>
        <label>2</label>
    </ligand>
</feature>
<feature type="binding site" evidence="1">
    <location>
        <position position="172"/>
    </location>
    <ligand>
        <name>Zn(2+)</name>
        <dbReference type="ChEBI" id="CHEBI:29105"/>
        <label>1</label>
        <note>catalytic</note>
    </ligand>
</feature>
<feature type="binding site" evidence="1">
    <location>
        <begin position="197"/>
        <end position="202"/>
    </location>
    <ligand>
        <name>NADP(+)</name>
        <dbReference type="ChEBI" id="CHEBI:58349"/>
    </ligand>
</feature>
<feature type="binding site" evidence="2">
    <location>
        <position position="226"/>
    </location>
    <ligand>
        <name>NADP(+)</name>
        <dbReference type="ChEBI" id="CHEBI:58349"/>
    </ligand>
</feature>
<feature type="binding site" evidence="1">
    <location>
        <begin position="283"/>
        <end position="285"/>
    </location>
    <ligand>
        <name>NADP(+)</name>
        <dbReference type="ChEBI" id="CHEBI:58349"/>
    </ligand>
</feature>
<feature type="binding site" evidence="2">
    <location>
        <position position="307"/>
    </location>
    <ligand>
        <name>NADP(+)</name>
        <dbReference type="ChEBI" id="CHEBI:58349"/>
    </ligand>
</feature>
<feature type="binding site" evidence="2">
    <location>
        <position position="354"/>
    </location>
    <ligand>
        <name>NADP(+)</name>
        <dbReference type="ChEBI" id="CHEBI:58349"/>
    </ligand>
</feature>
<dbReference type="EC" id="1.5.1.57" evidence="3"/>
<dbReference type="EMBL" id="OM304294">
    <property type="protein sequence ID" value="UQZ09625.1"/>
    <property type="molecule type" value="mRNA"/>
</dbReference>
<dbReference type="SMR" id="P0DO83"/>
<dbReference type="KEGG" id="ag:UQZ09625"/>
<dbReference type="GO" id="GO:0004022">
    <property type="term" value="F:alcohol dehydrogenase (NAD+) activity"/>
    <property type="evidence" value="ECO:0000314"/>
    <property type="project" value="UniProtKB"/>
</dbReference>
<dbReference type="GO" id="GO:0008270">
    <property type="term" value="F:zinc ion binding"/>
    <property type="evidence" value="ECO:0007669"/>
    <property type="project" value="InterPro"/>
</dbReference>
<dbReference type="GO" id="GO:0009821">
    <property type="term" value="P:alkaloid biosynthetic process"/>
    <property type="evidence" value="ECO:0000314"/>
    <property type="project" value="UniProtKB"/>
</dbReference>
<dbReference type="CDD" id="cd05283">
    <property type="entry name" value="CAD1"/>
    <property type="match status" value="1"/>
</dbReference>
<dbReference type="FunFam" id="3.40.50.720:FF:000022">
    <property type="entry name" value="Cinnamyl alcohol dehydrogenase"/>
    <property type="match status" value="1"/>
</dbReference>
<dbReference type="Gene3D" id="3.90.180.10">
    <property type="entry name" value="Medium-chain alcohol dehydrogenases, catalytic domain"/>
    <property type="match status" value="1"/>
</dbReference>
<dbReference type="Gene3D" id="3.40.50.720">
    <property type="entry name" value="NAD(P)-binding Rossmann-like Domain"/>
    <property type="match status" value="1"/>
</dbReference>
<dbReference type="InterPro" id="IPR013149">
    <property type="entry name" value="ADH-like_C"/>
</dbReference>
<dbReference type="InterPro" id="IPR013154">
    <property type="entry name" value="ADH-like_N"/>
</dbReference>
<dbReference type="InterPro" id="IPR002328">
    <property type="entry name" value="ADH_Zn_CS"/>
</dbReference>
<dbReference type="InterPro" id="IPR047109">
    <property type="entry name" value="CAD-like"/>
</dbReference>
<dbReference type="InterPro" id="IPR011032">
    <property type="entry name" value="GroES-like_sf"/>
</dbReference>
<dbReference type="InterPro" id="IPR036291">
    <property type="entry name" value="NAD(P)-bd_dom_sf"/>
</dbReference>
<dbReference type="InterPro" id="IPR020843">
    <property type="entry name" value="PKS_ER"/>
</dbReference>
<dbReference type="PANTHER" id="PTHR42683">
    <property type="entry name" value="ALDEHYDE REDUCTASE"/>
    <property type="match status" value="1"/>
</dbReference>
<dbReference type="Pfam" id="PF08240">
    <property type="entry name" value="ADH_N"/>
    <property type="match status" value="1"/>
</dbReference>
<dbReference type="Pfam" id="PF00107">
    <property type="entry name" value="ADH_zinc_N"/>
    <property type="match status" value="1"/>
</dbReference>
<dbReference type="SMART" id="SM00829">
    <property type="entry name" value="PKS_ER"/>
    <property type="match status" value="1"/>
</dbReference>
<dbReference type="SUPFAM" id="SSF50129">
    <property type="entry name" value="GroES-like"/>
    <property type="match status" value="1"/>
</dbReference>
<dbReference type="SUPFAM" id="SSF51735">
    <property type="entry name" value="NAD(P)-binding Rossmann-fold domains"/>
    <property type="match status" value="1"/>
</dbReference>
<dbReference type="PROSITE" id="PS00059">
    <property type="entry name" value="ADH_ZINC"/>
    <property type="match status" value="1"/>
</dbReference>
<evidence type="ECO:0000250" key="1">
    <source>
        <dbReference type="UniProtKB" id="P00327"/>
    </source>
</evidence>
<evidence type="ECO:0000250" key="2">
    <source>
        <dbReference type="UniProtKB" id="P06525"/>
    </source>
</evidence>
<evidence type="ECO:0000269" key="3">
    <source>
    </source>
</evidence>
<evidence type="ECO:0000303" key="4">
    <source>
    </source>
</evidence>
<evidence type="ECO:0000305" key="5"/>
<sequence>MARKSQMVEAFGWAARDASGVLSPFKFLRRATGERDVQFKVLYCGICDWDMIVLKDGFGTTTYPVVPGHEIVGVVTEVGSKVQKFKVGDTVGVGTLVGSCRTCKKCKNDLENYCHSYLMADGACYTYGNTVCGDMSTRAYGGYSDIMVVDEYFAIVWPAKNYPLAAGVPLLCGGIVAYSPMRYYGLDEPGMHIGIVGLGGIGRMAVKFAKAFGAKVTVISTSINKKQEALEKFGADSFLFSKDTEEMEAAADTLDGIIDTAPKIHPIAPLIDLLKFEGKLILLGAVEESYELPASPLIVERKMVAGSASGSVKEIQEMMDFAAKHNIVAEIEIIPIDYVNIAIGRIEKGDATDRFVIDIANTLKSGEDVNSS</sequence>